<reference key="1">
    <citation type="submission" date="2009-01" db="EMBL/GenBank/DDBJ databases">
        <title>Complete sequence of chromosome of Arthrobacter chlorophenolicus A6.</title>
        <authorList>
            <consortium name="US DOE Joint Genome Institute"/>
            <person name="Lucas S."/>
            <person name="Copeland A."/>
            <person name="Lapidus A."/>
            <person name="Glavina del Rio T."/>
            <person name="Tice H."/>
            <person name="Bruce D."/>
            <person name="Goodwin L."/>
            <person name="Pitluck S."/>
            <person name="Goltsman E."/>
            <person name="Clum A."/>
            <person name="Larimer F."/>
            <person name="Land M."/>
            <person name="Hauser L."/>
            <person name="Kyrpides N."/>
            <person name="Mikhailova N."/>
            <person name="Jansson J."/>
            <person name="Richardson P."/>
        </authorList>
    </citation>
    <scope>NUCLEOTIDE SEQUENCE [LARGE SCALE GENOMIC DNA]</scope>
    <source>
        <strain>ATCC 700700 / DSM 12829 / CIP 107037 / JCM 12360 / KCTC 9906 / NCIMB 13794 / A6</strain>
    </source>
</reference>
<name>LIPB_PSECP</name>
<proteinExistence type="inferred from homology"/>
<gene>
    <name evidence="1" type="primary">lipB</name>
    <name type="ordered locus">Achl_1599</name>
</gene>
<accession>B8HGZ8</accession>
<protein>
    <recommendedName>
        <fullName evidence="1">Octanoyltransferase</fullName>
        <ecNumber evidence="1">2.3.1.181</ecNumber>
    </recommendedName>
    <alternativeName>
        <fullName evidence="1">Lipoate-protein ligase B</fullName>
    </alternativeName>
    <alternativeName>
        <fullName evidence="1">Lipoyl/octanoyl transferase</fullName>
    </alternativeName>
    <alternativeName>
        <fullName evidence="1">Octanoyl-[acyl-carrier-protein]-protein N-octanoyltransferase</fullName>
    </alternativeName>
</protein>
<comment type="function">
    <text evidence="1">Catalyzes the transfer of endogenously produced octanoic acid from octanoyl-acyl-carrier-protein onto the lipoyl domains of lipoate-dependent enzymes. Lipoyl-ACP can also act as a substrate although octanoyl-ACP is likely to be the physiological substrate.</text>
</comment>
<comment type="catalytic activity">
    <reaction evidence="1">
        <text>octanoyl-[ACP] + L-lysyl-[protein] = N(6)-octanoyl-L-lysyl-[protein] + holo-[ACP] + H(+)</text>
        <dbReference type="Rhea" id="RHEA:17665"/>
        <dbReference type="Rhea" id="RHEA-COMP:9636"/>
        <dbReference type="Rhea" id="RHEA-COMP:9685"/>
        <dbReference type="Rhea" id="RHEA-COMP:9752"/>
        <dbReference type="Rhea" id="RHEA-COMP:9928"/>
        <dbReference type="ChEBI" id="CHEBI:15378"/>
        <dbReference type="ChEBI" id="CHEBI:29969"/>
        <dbReference type="ChEBI" id="CHEBI:64479"/>
        <dbReference type="ChEBI" id="CHEBI:78463"/>
        <dbReference type="ChEBI" id="CHEBI:78809"/>
        <dbReference type="EC" id="2.3.1.181"/>
    </reaction>
</comment>
<comment type="pathway">
    <text evidence="1">Protein modification; protein lipoylation via endogenous pathway; protein N(6)-(lipoyl)lysine from octanoyl-[acyl-carrier-protein]: step 1/2.</text>
</comment>
<comment type="subcellular location">
    <subcellularLocation>
        <location evidence="1">Cytoplasm</location>
    </subcellularLocation>
</comment>
<comment type="miscellaneous">
    <text evidence="1">In the reaction, the free carboxyl group of octanoic acid is attached via an amide linkage to the epsilon-amino group of a specific lysine residue of lipoyl domains of lipoate-dependent enzymes.</text>
</comment>
<comment type="similarity">
    <text evidence="1">Belongs to the LipB family.</text>
</comment>
<dbReference type="EC" id="2.3.1.181" evidence="1"/>
<dbReference type="EMBL" id="CP001341">
    <property type="protein sequence ID" value="ACL39587.1"/>
    <property type="molecule type" value="Genomic_DNA"/>
</dbReference>
<dbReference type="RefSeq" id="WP_015936807.1">
    <property type="nucleotide sequence ID" value="NC_011886.1"/>
</dbReference>
<dbReference type="SMR" id="B8HGZ8"/>
<dbReference type="STRING" id="452863.Achl_1599"/>
<dbReference type="KEGG" id="ach:Achl_1599"/>
<dbReference type="eggNOG" id="COG0321">
    <property type="taxonomic scope" value="Bacteria"/>
</dbReference>
<dbReference type="HOGENOM" id="CLU_035168_2_1_11"/>
<dbReference type="OrthoDB" id="9787061at2"/>
<dbReference type="UniPathway" id="UPA00538">
    <property type="reaction ID" value="UER00592"/>
</dbReference>
<dbReference type="Proteomes" id="UP000002505">
    <property type="component" value="Chromosome"/>
</dbReference>
<dbReference type="GO" id="GO:0005737">
    <property type="term" value="C:cytoplasm"/>
    <property type="evidence" value="ECO:0007669"/>
    <property type="project" value="UniProtKB-SubCell"/>
</dbReference>
<dbReference type="GO" id="GO:0033819">
    <property type="term" value="F:lipoyl(octanoyl) transferase activity"/>
    <property type="evidence" value="ECO:0007669"/>
    <property type="project" value="UniProtKB-EC"/>
</dbReference>
<dbReference type="GO" id="GO:0036211">
    <property type="term" value="P:protein modification process"/>
    <property type="evidence" value="ECO:0007669"/>
    <property type="project" value="InterPro"/>
</dbReference>
<dbReference type="CDD" id="cd16444">
    <property type="entry name" value="LipB"/>
    <property type="match status" value="1"/>
</dbReference>
<dbReference type="Gene3D" id="3.30.930.10">
    <property type="entry name" value="Bira Bifunctional Protein, Domain 2"/>
    <property type="match status" value="1"/>
</dbReference>
<dbReference type="HAMAP" id="MF_00013">
    <property type="entry name" value="LipB"/>
    <property type="match status" value="1"/>
</dbReference>
<dbReference type="InterPro" id="IPR045864">
    <property type="entry name" value="aa-tRNA-synth_II/BPL/LPL"/>
</dbReference>
<dbReference type="InterPro" id="IPR004143">
    <property type="entry name" value="BPL_LPL_catalytic"/>
</dbReference>
<dbReference type="InterPro" id="IPR000544">
    <property type="entry name" value="Octanoyltransferase"/>
</dbReference>
<dbReference type="InterPro" id="IPR020605">
    <property type="entry name" value="Octanoyltransferase_CS"/>
</dbReference>
<dbReference type="NCBIfam" id="TIGR00214">
    <property type="entry name" value="lipB"/>
    <property type="match status" value="1"/>
</dbReference>
<dbReference type="NCBIfam" id="NF010925">
    <property type="entry name" value="PRK14345.1"/>
    <property type="match status" value="1"/>
</dbReference>
<dbReference type="PANTHER" id="PTHR10993:SF7">
    <property type="entry name" value="LIPOYLTRANSFERASE 2, MITOCHONDRIAL-RELATED"/>
    <property type="match status" value="1"/>
</dbReference>
<dbReference type="PANTHER" id="PTHR10993">
    <property type="entry name" value="OCTANOYLTRANSFERASE"/>
    <property type="match status" value="1"/>
</dbReference>
<dbReference type="Pfam" id="PF21948">
    <property type="entry name" value="LplA-B_cat"/>
    <property type="match status" value="1"/>
</dbReference>
<dbReference type="PIRSF" id="PIRSF016262">
    <property type="entry name" value="LPLase"/>
    <property type="match status" value="1"/>
</dbReference>
<dbReference type="SUPFAM" id="SSF55681">
    <property type="entry name" value="Class II aaRS and biotin synthetases"/>
    <property type="match status" value="1"/>
</dbReference>
<dbReference type="PROSITE" id="PS51733">
    <property type="entry name" value="BPL_LPL_CATALYTIC"/>
    <property type="match status" value="1"/>
</dbReference>
<dbReference type="PROSITE" id="PS01313">
    <property type="entry name" value="LIPB"/>
    <property type="match status" value="1"/>
</dbReference>
<feature type="chain" id="PRO_1000116538" description="Octanoyltransferase">
    <location>
        <begin position="1"/>
        <end position="222"/>
    </location>
</feature>
<feature type="domain" description="BPL/LPL catalytic" evidence="2">
    <location>
        <begin position="34"/>
        <end position="214"/>
    </location>
</feature>
<feature type="active site" description="Acyl-thioester intermediate" evidence="1">
    <location>
        <position position="175"/>
    </location>
</feature>
<feature type="binding site" evidence="1">
    <location>
        <begin position="72"/>
        <end position="79"/>
    </location>
    <ligand>
        <name>substrate</name>
    </ligand>
</feature>
<feature type="binding site" evidence="1">
    <location>
        <begin position="144"/>
        <end position="146"/>
    </location>
    <ligand>
        <name>substrate</name>
    </ligand>
</feature>
<feature type="binding site" evidence="1">
    <location>
        <begin position="157"/>
        <end position="159"/>
    </location>
    <ligand>
        <name>substrate</name>
    </ligand>
</feature>
<feature type="site" description="Lowers pKa of active site Cys" evidence="1">
    <location>
        <position position="141"/>
    </location>
</feature>
<keyword id="KW-0012">Acyltransferase</keyword>
<keyword id="KW-0963">Cytoplasm</keyword>
<keyword id="KW-0808">Transferase</keyword>
<sequence>MTLEFSGLGLAPEFVDYQHAWDVQRELHGKVVAGEAPSTVLLLEHAAVYTAGKLTEDHERPFDGTPVVAVDRGGKLTWHGPGQLIAYPILKLKNRAGIRDYVERLEAVMIAVMADYGIRAERIKGRAGVWVKADANGPDRKIAAIGIRVLNGVTMHGVAINCSNDLAPYGQIIACGITDAGVTTMSRETGKDIRPADIAERFVEEFRKHEEALVSSPEGALL</sequence>
<evidence type="ECO:0000255" key="1">
    <source>
        <dbReference type="HAMAP-Rule" id="MF_00013"/>
    </source>
</evidence>
<evidence type="ECO:0000255" key="2">
    <source>
        <dbReference type="PROSITE-ProRule" id="PRU01067"/>
    </source>
</evidence>
<organism>
    <name type="scientific">Pseudarthrobacter chlorophenolicus (strain ATCC 700700 / DSM 12829 / CIP 107037 / JCM 12360 / KCTC 9906 / NCIMB 13794 / A6)</name>
    <name type="common">Arthrobacter chlorophenolicus</name>
    <dbReference type="NCBI Taxonomy" id="452863"/>
    <lineage>
        <taxon>Bacteria</taxon>
        <taxon>Bacillati</taxon>
        <taxon>Actinomycetota</taxon>
        <taxon>Actinomycetes</taxon>
        <taxon>Micrococcales</taxon>
        <taxon>Micrococcaceae</taxon>
        <taxon>Pseudarthrobacter</taxon>
    </lineage>
</organism>